<gene>
    <name type="primary">GTF3C2</name>
</gene>
<sequence>MDTCGVGYVALGEAGPVGNMTVVDSPGQEVLNQLDVKTSSEMTSAEASIEMSLPTPLPGFEDSPDQRRLPPEQESLSRLEQQDLSSEMSKVSKPRASKPGRKRGGRTRKGPKRPQQPNPPSAPLVPGLLDQSNPLSTPMPKKRGRKSKAELLLLKLSKDLDRPESQSPKRPPEDFETPSGERPRRRAAQVALLYLQELAEELSTALPAPVSCPEGPKVSSPTKPKKIRQPAACPGGEEVDGAPRDEDFFLQVEAEDVEESEGPSESSSEPEPAVPRSTPRGSTSGKQKPHCRGMAPNGLPNHIMAPVWKCLHLTKDFREQKHSYWEFAEWIPLAWKWHLLSELEAAPYLPQEEKSPLFSVQREGLPEDGTLYRINRFSSITAHPERWDVSFFTGGPLWALDWCPVPEGAGASQYVALFSSPDMNETHPLSQLHSGPGLLQLWGLGTLQQESCPGNRAHFVYGIACDNGCIWDLKFCPSGAWELPGTPRKAPLLPRLGLLALACSDGKVLLFSLPHPEALLAQQPPDAVKPAIYKVQCVATLQVGSMQATDPSECGQCLSLAWMPTRPHQHLAAGYYNGMVVFWNLPTNSPLQRIRLSDGSLKLYPFQCFLAHDQAVRTLQWCKANSHFLASAGSDRKIKFWDLRRPYEPINSIKRFLSTELAWLLPYNGVTVAQDNCYASYGLCGIHYIDAGYLGFKAYFTAPRKGTVWSLSGSDWLGTIAAGDISGELIAAILPDMALNPINVKRPVERRFPIYKADLIPYQDSPEGPDHSSASSGVPNPPKARTYTETVNHHYLLFQDTDLGSFHDLLRREPMLRMQEGEGHSQLCLDRLQLEAIHKVRFSPNLDSYGWLVSGGQSGLVRIHFVRGLASPLGHRMQLESRAHFNAMFQPSSPTRRPGFSPTSHRLLPTP</sequence>
<evidence type="ECO:0000250" key="1"/>
<evidence type="ECO:0000250" key="2">
    <source>
        <dbReference type="UniProtKB" id="Q8WUA4"/>
    </source>
</evidence>
<evidence type="ECO:0000256" key="3">
    <source>
        <dbReference type="SAM" id="MobiDB-lite"/>
    </source>
</evidence>
<reference key="1">
    <citation type="submission" date="2004-11" db="EMBL/GenBank/DDBJ databases">
        <authorList>
            <consortium name="The German cDNA consortium"/>
        </authorList>
    </citation>
    <scope>NUCLEOTIDE SEQUENCE [LARGE SCALE MRNA]</scope>
    <source>
        <tissue>Kidney</tissue>
    </source>
</reference>
<organism>
    <name type="scientific">Pongo abelii</name>
    <name type="common">Sumatran orangutan</name>
    <name type="synonym">Pongo pygmaeus abelii</name>
    <dbReference type="NCBI Taxonomy" id="9601"/>
    <lineage>
        <taxon>Eukaryota</taxon>
        <taxon>Metazoa</taxon>
        <taxon>Chordata</taxon>
        <taxon>Craniata</taxon>
        <taxon>Vertebrata</taxon>
        <taxon>Euteleostomi</taxon>
        <taxon>Mammalia</taxon>
        <taxon>Eutheria</taxon>
        <taxon>Euarchontoglires</taxon>
        <taxon>Primates</taxon>
        <taxon>Haplorrhini</taxon>
        <taxon>Catarrhini</taxon>
        <taxon>Hominidae</taxon>
        <taxon>Pongo</taxon>
    </lineage>
</organism>
<dbReference type="EMBL" id="CR857991">
    <property type="protein sequence ID" value="CAH90234.1"/>
    <property type="molecule type" value="mRNA"/>
</dbReference>
<dbReference type="RefSeq" id="NP_001127256.1">
    <property type="nucleotide sequence ID" value="NM_001133784.2"/>
</dbReference>
<dbReference type="SMR" id="Q5RDC3"/>
<dbReference type="FunCoup" id="Q5RDC3">
    <property type="interactions" value="2594"/>
</dbReference>
<dbReference type="STRING" id="9601.ENSPPYP00000014018"/>
<dbReference type="GeneID" id="100174311"/>
<dbReference type="KEGG" id="pon:100174311"/>
<dbReference type="CTD" id="2976"/>
<dbReference type="eggNOG" id="ENOG502RAA6">
    <property type="taxonomic scope" value="Eukaryota"/>
</dbReference>
<dbReference type="InParanoid" id="Q5RDC3"/>
<dbReference type="OrthoDB" id="4703at2759"/>
<dbReference type="Proteomes" id="UP000001595">
    <property type="component" value="Unplaced"/>
</dbReference>
<dbReference type="GO" id="GO:0005634">
    <property type="term" value="C:nucleus"/>
    <property type="evidence" value="ECO:0007669"/>
    <property type="project" value="UniProtKB-SubCell"/>
</dbReference>
<dbReference type="GO" id="GO:0000127">
    <property type="term" value="C:transcription factor TFIIIC complex"/>
    <property type="evidence" value="ECO:0007669"/>
    <property type="project" value="TreeGrafter"/>
</dbReference>
<dbReference type="GO" id="GO:0006383">
    <property type="term" value="P:transcription by RNA polymerase III"/>
    <property type="evidence" value="ECO:0007669"/>
    <property type="project" value="TreeGrafter"/>
</dbReference>
<dbReference type="FunFam" id="2.130.10.10:FF:000311">
    <property type="entry name" value="general transcription factor 3C polypeptide 2"/>
    <property type="match status" value="1"/>
</dbReference>
<dbReference type="Gene3D" id="2.130.10.10">
    <property type="entry name" value="YVTN repeat-like/Quinoprotein amine dehydrogenase"/>
    <property type="match status" value="1"/>
</dbReference>
<dbReference type="InterPro" id="IPR052416">
    <property type="entry name" value="GTF3C_component"/>
</dbReference>
<dbReference type="InterPro" id="IPR015943">
    <property type="entry name" value="WD40/YVTN_repeat-like_dom_sf"/>
</dbReference>
<dbReference type="InterPro" id="IPR019775">
    <property type="entry name" value="WD40_repeat_CS"/>
</dbReference>
<dbReference type="InterPro" id="IPR036322">
    <property type="entry name" value="WD40_repeat_dom_sf"/>
</dbReference>
<dbReference type="InterPro" id="IPR001680">
    <property type="entry name" value="WD40_rpt"/>
</dbReference>
<dbReference type="PANTHER" id="PTHR15052:SF2">
    <property type="entry name" value="GENERAL TRANSCRIPTION FACTOR 3C POLYPEPTIDE 2"/>
    <property type="match status" value="1"/>
</dbReference>
<dbReference type="PANTHER" id="PTHR15052">
    <property type="entry name" value="RNA POLYMERASE III TRANSCRIPTION INITIATION FACTOR COMPLEX SUBUNIT"/>
    <property type="match status" value="1"/>
</dbReference>
<dbReference type="Pfam" id="PF00400">
    <property type="entry name" value="WD40"/>
    <property type="match status" value="1"/>
</dbReference>
<dbReference type="SMART" id="SM00320">
    <property type="entry name" value="WD40"/>
    <property type="match status" value="4"/>
</dbReference>
<dbReference type="SUPFAM" id="SSF50978">
    <property type="entry name" value="WD40 repeat-like"/>
    <property type="match status" value="1"/>
</dbReference>
<dbReference type="PROSITE" id="PS00678">
    <property type="entry name" value="WD_REPEATS_1"/>
    <property type="match status" value="2"/>
</dbReference>
<dbReference type="PROSITE" id="PS50082">
    <property type="entry name" value="WD_REPEATS_2"/>
    <property type="match status" value="1"/>
</dbReference>
<dbReference type="PROSITE" id="PS50294">
    <property type="entry name" value="WD_REPEATS_REGION"/>
    <property type="match status" value="1"/>
</dbReference>
<keyword id="KW-0539">Nucleus</keyword>
<keyword id="KW-0597">Phosphoprotein</keyword>
<keyword id="KW-1185">Reference proteome</keyword>
<keyword id="KW-0677">Repeat</keyword>
<keyword id="KW-0804">Transcription</keyword>
<keyword id="KW-0853">WD repeat</keyword>
<feature type="chain" id="PRO_0000351648" description="General transcription factor 3C polypeptide 2">
    <location>
        <begin position="1"/>
        <end position="911"/>
    </location>
</feature>
<feature type="repeat" description="WD 1">
    <location>
        <begin position="465"/>
        <end position="521"/>
    </location>
</feature>
<feature type="repeat" description="WD 2">
    <location>
        <begin position="552"/>
        <end position="593"/>
    </location>
</feature>
<feature type="repeat" description="WD 3">
    <location>
        <begin position="611"/>
        <end position="651"/>
    </location>
</feature>
<feature type="repeat" description="WD 4">
    <location>
        <begin position="832"/>
        <end position="874"/>
    </location>
</feature>
<feature type="region of interest" description="Disordered" evidence="3">
    <location>
        <begin position="34"/>
        <end position="187"/>
    </location>
</feature>
<feature type="region of interest" description="Disordered" evidence="3">
    <location>
        <begin position="205"/>
        <end position="297"/>
    </location>
</feature>
<feature type="region of interest" description="Disordered" evidence="3">
    <location>
        <begin position="765"/>
        <end position="785"/>
    </location>
</feature>
<feature type="region of interest" description="Disordered" evidence="3">
    <location>
        <begin position="889"/>
        <end position="911"/>
    </location>
</feature>
<feature type="compositionally biased region" description="Polar residues" evidence="3">
    <location>
        <begin position="35"/>
        <end position="46"/>
    </location>
</feature>
<feature type="compositionally biased region" description="Basic and acidic residues" evidence="3">
    <location>
        <begin position="64"/>
        <end position="81"/>
    </location>
</feature>
<feature type="compositionally biased region" description="Basic residues" evidence="3">
    <location>
        <begin position="92"/>
        <end position="112"/>
    </location>
</feature>
<feature type="compositionally biased region" description="Pro residues" evidence="3">
    <location>
        <begin position="114"/>
        <end position="123"/>
    </location>
</feature>
<feature type="compositionally biased region" description="Acidic residues" evidence="3">
    <location>
        <begin position="253"/>
        <end position="262"/>
    </location>
</feature>
<feature type="compositionally biased region" description="Low complexity" evidence="3">
    <location>
        <begin position="263"/>
        <end position="275"/>
    </location>
</feature>
<feature type="modified residue" description="Phosphoserine" evidence="2">
    <location>
        <position position="63"/>
    </location>
</feature>
<feature type="modified residue" description="Phosphoserine" evidence="2">
    <location>
        <position position="132"/>
    </location>
</feature>
<feature type="modified residue" description="Phosphoserine" evidence="2">
    <location>
        <position position="165"/>
    </location>
</feature>
<feature type="modified residue" description="Phosphoserine" evidence="2">
    <location>
        <position position="167"/>
    </location>
</feature>
<feature type="modified residue" description="Phosphoserine" evidence="2">
    <location>
        <position position="220"/>
    </location>
</feature>
<feature type="modified residue" description="Phosphoserine" evidence="2">
    <location>
        <position position="260"/>
    </location>
</feature>
<feature type="modified residue" description="Phosphoserine" evidence="2">
    <location>
        <position position="597"/>
    </location>
</feature>
<feature type="modified residue" description="Phosphoserine" evidence="2">
    <location>
        <position position="871"/>
    </location>
</feature>
<feature type="modified residue" description="Phosphoserine" evidence="2">
    <location>
        <position position="892"/>
    </location>
</feature>
<feature type="modified residue" description="Phosphoserine" evidence="2">
    <location>
        <position position="893"/>
    </location>
</feature>
<feature type="modified residue" description="Phosphothreonine" evidence="2">
    <location>
        <position position="895"/>
    </location>
</feature>
<feature type="modified residue" description="Phosphoserine" evidence="2">
    <location>
        <position position="901"/>
    </location>
</feature>
<proteinExistence type="evidence at transcript level"/>
<name>TF3C2_PONAB</name>
<accession>Q5RDC3</accession>
<comment type="function">
    <text evidence="1">Required for RNA polymerase III-mediated transcription. Component of TFIIIC that initiates transcription complex assembly on tRNA and is required for transcription of 5S rRNA and other stable nuclear and cytoplasmic RNAs. May play a direct role in stabilizing interactions of TFIIIC2 with TFIIIC1 (By similarity).</text>
</comment>
<comment type="subunit">
    <text evidence="1">Part of the TFIIIC subcomplex TFIIIC2, consisting of six subunits, GTF3C1, GTF3C2, GTF3C3, GTF3C4, GTF3C5 and GTF3C6.</text>
</comment>
<comment type="subcellular location">
    <subcellularLocation>
        <location evidence="1">Nucleus</location>
    </subcellularLocation>
</comment>
<protein>
    <recommendedName>
        <fullName>General transcription factor 3C polypeptide 2</fullName>
    </recommendedName>
    <alternativeName>
        <fullName>TF3C-beta</fullName>
    </alternativeName>
    <alternativeName>
        <fullName>Transcription factor IIIC subunit beta</fullName>
    </alternativeName>
</protein>